<proteinExistence type="inferred from homology"/>
<keyword id="KW-0997">Cell inner membrane</keyword>
<keyword id="KW-1003">Cell membrane</keyword>
<keyword id="KW-0342">GTP-binding</keyword>
<keyword id="KW-0378">Hydrolase</keyword>
<keyword id="KW-0472">Membrane</keyword>
<keyword id="KW-0547">Nucleotide-binding</keyword>
<keyword id="KW-0648">Protein biosynthesis</keyword>
<dbReference type="EC" id="3.6.5.n1" evidence="1"/>
<dbReference type="EMBL" id="CP001150">
    <property type="protein sequence ID" value="ACM00257.1"/>
    <property type="molecule type" value="Genomic_DNA"/>
</dbReference>
<dbReference type="SMR" id="B9KNH9"/>
<dbReference type="KEGG" id="rsk:RSKD131_0397"/>
<dbReference type="HOGENOM" id="CLU_009995_3_3_5"/>
<dbReference type="GO" id="GO:0005886">
    <property type="term" value="C:plasma membrane"/>
    <property type="evidence" value="ECO:0007669"/>
    <property type="project" value="UniProtKB-SubCell"/>
</dbReference>
<dbReference type="GO" id="GO:0005525">
    <property type="term" value="F:GTP binding"/>
    <property type="evidence" value="ECO:0007669"/>
    <property type="project" value="UniProtKB-UniRule"/>
</dbReference>
<dbReference type="GO" id="GO:0003924">
    <property type="term" value="F:GTPase activity"/>
    <property type="evidence" value="ECO:0007669"/>
    <property type="project" value="UniProtKB-UniRule"/>
</dbReference>
<dbReference type="GO" id="GO:0097216">
    <property type="term" value="F:guanosine tetraphosphate binding"/>
    <property type="evidence" value="ECO:0007669"/>
    <property type="project" value="UniProtKB-ARBA"/>
</dbReference>
<dbReference type="GO" id="GO:0043022">
    <property type="term" value="F:ribosome binding"/>
    <property type="evidence" value="ECO:0007669"/>
    <property type="project" value="UniProtKB-UniRule"/>
</dbReference>
<dbReference type="GO" id="GO:0003746">
    <property type="term" value="F:translation elongation factor activity"/>
    <property type="evidence" value="ECO:0007669"/>
    <property type="project" value="UniProtKB-UniRule"/>
</dbReference>
<dbReference type="GO" id="GO:0045727">
    <property type="term" value="P:positive regulation of translation"/>
    <property type="evidence" value="ECO:0007669"/>
    <property type="project" value="UniProtKB-UniRule"/>
</dbReference>
<dbReference type="CDD" id="cd03699">
    <property type="entry name" value="EF4_II"/>
    <property type="match status" value="1"/>
</dbReference>
<dbReference type="CDD" id="cd16260">
    <property type="entry name" value="EF4_III"/>
    <property type="match status" value="1"/>
</dbReference>
<dbReference type="CDD" id="cd01890">
    <property type="entry name" value="LepA"/>
    <property type="match status" value="1"/>
</dbReference>
<dbReference type="CDD" id="cd03709">
    <property type="entry name" value="lepA_C"/>
    <property type="match status" value="1"/>
</dbReference>
<dbReference type="FunFam" id="3.40.50.300:FF:000078">
    <property type="entry name" value="Elongation factor 4"/>
    <property type="match status" value="1"/>
</dbReference>
<dbReference type="FunFam" id="2.40.30.10:FF:000015">
    <property type="entry name" value="Translation factor GUF1, mitochondrial"/>
    <property type="match status" value="1"/>
</dbReference>
<dbReference type="FunFam" id="3.30.70.240:FF:000007">
    <property type="entry name" value="Translation factor GUF1, mitochondrial"/>
    <property type="match status" value="1"/>
</dbReference>
<dbReference type="FunFam" id="3.30.70.2570:FF:000001">
    <property type="entry name" value="Translation factor GUF1, mitochondrial"/>
    <property type="match status" value="1"/>
</dbReference>
<dbReference type="FunFam" id="3.30.70.870:FF:000004">
    <property type="entry name" value="Translation factor GUF1, mitochondrial"/>
    <property type="match status" value="1"/>
</dbReference>
<dbReference type="Gene3D" id="3.30.70.240">
    <property type="match status" value="1"/>
</dbReference>
<dbReference type="Gene3D" id="3.30.70.2570">
    <property type="entry name" value="Elongation factor 4, C-terminal domain"/>
    <property type="match status" value="1"/>
</dbReference>
<dbReference type="Gene3D" id="3.30.70.870">
    <property type="entry name" value="Elongation Factor G (Translational Gtpase), domain 3"/>
    <property type="match status" value="1"/>
</dbReference>
<dbReference type="Gene3D" id="3.40.50.300">
    <property type="entry name" value="P-loop containing nucleotide triphosphate hydrolases"/>
    <property type="match status" value="1"/>
</dbReference>
<dbReference type="Gene3D" id="2.40.30.10">
    <property type="entry name" value="Translation factors"/>
    <property type="match status" value="1"/>
</dbReference>
<dbReference type="HAMAP" id="MF_00071">
    <property type="entry name" value="LepA"/>
    <property type="match status" value="1"/>
</dbReference>
<dbReference type="InterPro" id="IPR006297">
    <property type="entry name" value="EF-4"/>
</dbReference>
<dbReference type="InterPro" id="IPR041095">
    <property type="entry name" value="EFG_II"/>
</dbReference>
<dbReference type="InterPro" id="IPR035647">
    <property type="entry name" value="EFG_III/V"/>
</dbReference>
<dbReference type="InterPro" id="IPR000640">
    <property type="entry name" value="EFG_V-like"/>
</dbReference>
<dbReference type="InterPro" id="IPR004161">
    <property type="entry name" value="EFTu-like_2"/>
</dbReference>
<dbReference type="InterPro" id="IPR031157">
    <property type="entry name" value="G_TR_CS"/>
</dbReference>
<dbReference type="InterPro" id="IPR038363">
    <property type="entry name" value="LepA_C_sf"/>
</dbReference>
<dbReference type="InterPro" id="IPR013842">
    <property type="entry name" value="LepA_CTD"/>
</dbReference>
<dbReference type="InterPro" id="IPR035654">
    <property type="entry name" value="LepA_IV"/>
</dbReference>
<dbReference type="InterPro" id="IPR027417">
    <property type="entry name" value="P-loop_NTPase"/>
</dbReference>
<dbReference type="InterPro" id="IPR005225">
    <property type="entry name" value="Small_GTP-bd"/>
</dbReference>
<dbReference type="InterPro" id="IPR000795">
    <property type="entry name" value="T_Tr_GTP-bd_dom"/>
</dbReference>
<dbReference type="NCBIfam" id="TIGR01393">
    <property type="entry name" value="lepA"/>
    <property type="match status" value="1"/>
</dbReference>
<dbReference type="NCBIfam" id="TIGR00231">
    <property type="entry name" value="small_GTP"/>
    <property type="match status" value="1"/>
</dbReference>
<dbReference type="PANTHER" id="PTHR43512:SF4">
    <property type="entry name" value="TRANSLATION FACTOR GUF1 HOMOLOG, CHLOROPLASTIC"/>
    <property type="match status" value="1"/>
</dbReference>
<dbReference type="PANTHER" id="PTHR43512">
    <property type="entry name" value="TRANSLATION FACTOR GUF1-RELATED"/>
    <property type="match status" value="1"/>
</dbReference>
<dbReference type="Pfam" id="PF00679">
    <property type="entry name" value="EFG_C"/>
    <property type="match status" value="1"/>
</dbReference>
<dbReference type="Pfam" id="PF14492">
    <property type="entry name" value="EFG_III"/>
    <property type="match status" value="1"/>
</dbReference>
<dbReference type="Pfam" id="PF00009">
    <property type="entry name" value="GTP_EFTU"/>
    <property type="match status" value="1"/>
</dbReference>
<dbReference type="Pfam" id="PF03144">
    <property type="entry name" value="GTP_EFTU_D2"/>
    <property type="match status" value="1"/>
</dbReference>
<dbReference type="Pfam" id="PF06421">
    <property type="entry name" value="LepA_C"/>
    <property type="match status" value="1"/>
</dbReference>
<dbReference type="PRINTS" id="PR00315">
    <property type="entry name" value="ELONGATNFCT"/>
</dbReference>
<dbReference type="SMART" id="SM00838">
    <property type="entry name" value="EFG_C"/>
    <property type="match status" value="1"/>
</dbReference>
<dbReference type="SUPFAM" id="SSF54980">
    <property type="entry name" value="EF-G C-terminal domain-like"/>
    <property type="match status" value="2"/>
</dbReference>
<dbReference type="SUPFAM" id="SSF52540">
    <property type="entry name" value="P-loop containing nucleoside triphosphate hydrolases"/>
    <property type="match status" value="1"/>
</dbReference>
<dbReference type="PROSITE" id="PS00301">
    <property type="entry name" value="G_TR_1"/>
    <property type="match status" value="1"/>
</dbReference>
<dbReference type="PROSITE" id="PS51722">
    <property type="entry name" value="G_TR_2"/>
    <property type="match status" value="1"/>
</dbReference>
<protein>
    <recommendedName>
        <fullName evidence="1">Elongation factor 4</fullName>
        <shortName evidence="1">EF-4</shortName>
        <ecNumber evidence="1">3.6.5.n1</ecNumber>
    </recommendedName>
    <alternativeName>
        <fullName evidence="1">Ribosomal back-translocase LepA</fullName>
    </alternativeName>
</protein>
<sequence>MPRMTQLDLIRNFSIVAHIDHGKSTLADRLIQLTGTVAERDMKAQILDSMEIERERGITIKANTVRIDYPAKDGRTYVLNLIDTPGHVDFAYEVSRSMRAVEGSLLVVDASQGVEAQTLANVYQALDAGHEIVPVLNKIDLPAAEPERVKSQIEDVIGLDASDAVLISAKSGLGIPDVLEAIVHRLPPPKGDREAPLKAMLVDSWYDAYLGVVVMIRVMDGVIRKGDRVKMMQTGAVYGIDRLAVLKPQMVDIAELGPGEIGVLTASIKQVRDTRVGDTITHEKKGCAAPLPGFKPAQPVVFCGLFPVDANDFEALREAMEKLALNDASFTYEMETSAALGFGFRCGFLGLLHLEVVRDRLEREYDLDLITTAPSVVYQIYMKDGTLQELHNPTDMPDLTYVDHIEEPRIRATIMVPDEYLGDVLKLCQDRRGIQLDLSYAGARAMVVYDLPLNEVVFDFYDRLKSVTKGYASFDYQITGYREDFLVKMSILVNDEPVDALSMMVHRDRADMRGRAMVEKLKELIPRHMFKIPIQAAIGGRVIARETISAMRKDVTAKCYGGDATRKRKLLDKQKAGKKKMRQFGKVEIPQQAFINALKMDS</sequence>
<reference key="1">
    <citation type="journal article" date="2009" name="J. Bacteriol.">
        <title>Complete genome sequence of Rhodobacter sphaeroides KD131.</title>
        <authorList>
            <person name="Lim S.-K."/>
            <person name="Kim S.J."/>
            <person name="Cha S.H."/>
            <person name="Oh Y.-K."/>
            <person name="Rhee H.-J."/>
            <person name="Kim M.-S."/>
            <person name="Lee J.K."/>
        </authorList>
    </citation>
    <scope>NUCLEOTIDE SEQUENCE [LARGE SCALE GENOMIC DNA]</scope>
    <source>
        <strain>KD131 / KCTC 12085</strain>
    </source>
</reference>
<feature type="chain" id="PRO_1000190824" description="Elongation factor 4">
    <location>
        <begin position="1"/>
        <end position="602"/>
    </location>
</feature>
<feature type="domain" description="tr-type G">
    <location>
        <begin position="8"/>
        <end position="190"/>
    </location>
</feature>
<feature type="binding site" evidence="1">
    <location>
        <begin position="20"/>
        <end position="25"/>
    </location>
    <ligand>
        <name>GTP</name>
        <dbReference type="ChEBI" id="CHEBI:37565"/>
    </ligand>
</feature>
<feature type="binding site" evidence="1">
    <location>
        <begin position="137"/>
        <end position="140"/>
    </location>
    <ligand>
        <name>GTP</name>
        <dbReference type="ChEBI" id="CHEBI:37565"/>
    </ligand>
</feature>
<comment type="function">
    <text evidence="1">Required for accurate and efficient protein synthesis under certain stress conditions. May act as a fidelity factor of the translation reaction, by catalyzing a one-codon backward translocation of tRNAs on improperly translocated ribosomes. Back-translocation proceeds from a post-translocation (POST) complex to a pre-translocation (PRE) complex, thus giving elongation factor G a second chance to translocate the tRNAs correctly. Binds to ribosomes in a GTP-dependent manner.</text>
</comment>
<comment type="catalytic activity">
    <reaction evidence="1">
        <text>GTP + H2O = GDP + phosphate + H(+)</text>
        <dbReference type="Rhea" id="RHEA:19669"/>
        <dbReference type="ChEBI" id="CHEBI:15377"/>
        <dbReference type="ChEBI" id="CHEBI:15378"/>
        <dbReference type="ChEBI" id="CHEBI:37565"/>
        <dbReference type="ChEBI" id="CHEBI:43474"/>
        <dbReference type="ChEBI" id="CHEBI:58189"/>
        <dbReference type="EC" id="3.6.5.n1"/>
    </reaction>
</comment>
<comment type="subcellular location">
    <subcellularLocation>
        <location evidence="1">Cell inner membrane</location>
        <topology evidence="1">Peripheral membrane protein</topology>
        <orientation evidence="1">Cytoplasmic side</orientation>
    </subcellularLocation>
</comment>
<comment type="similarity">
    <text evidence="1">Belongs to the TRAFAC class translation factor GTPase superfamily. Classic translation factor GTPase family. LepA subfamily.</text>
</comment>
<accession>B9KNH9</accession>
<evidence type="ECO:0000255" key="1">
    <source>
        <dbReference type="HAMAP-Rule" id="MF_00071"/>
    </source>
</evidence>
<organism>
    <name type="scientific">Cereibacter sphaeroides (strain KD131 / KCTC 12085)</name>
    <name type="common">Rhodobacter sphaeroides</name>
    <dbReference type="NCBI Taxonomy" id="557760"/>
    <lineage>
        <taxon>Bacteria</taxon>
        <taxon>Pseudomonadati</taxon>
        <taxon>Pseudomonadota</taxon>
        <taxon>Alphaproteobacteria</taxon>
        <taxon>Rhodobacterales</taxon>
        <taxon>Paracoccaceae</taxon>
        <taxon>Cereibacter</taxon>
    </lineage>
</organism>
<gene>
    <name evidence="1" type="primary">lepA</name>
    <name type="ordered locus">RSKD131_0397</name>
</gene>
<name>LEPA_CERSK</name>